<dbReference type="EMBL" id="CP000627">
    <property type="protein sequence ID" value="ABQ20284.1"/>
    <property type="molecule type" value="Genomic_DNA"/>
</dbReference>
<dbReference type="EMBL" id="CP001235">
    <property type="protein sequence ID" value="ACP09758.1"/>
    <property type="molecule type" value="Genomic_DNA"/>
</dbReference>
<dbReference type="RefSeq" id="WP_000667185.1">
    <property type="nucleotide sequence ID" value="NZ_JAACZH010000011.1"/>
</dbReference>
<dbReference type="SMR" id="A5F7P6"/>
<dbReference type="GeneID" id="94013653"/>
<dbReference type="KEGG" id="vco:VC0395_A1246"/>
<dbReference type="KEGG" id="vcr:VC395_1757"/>
<dbReference type="PATRIC" id="fig|345073.21.peg.1702"/>
<dbReference type="eggNOG" id="COG1825">
    <property type="taxonomic scope" value="Bacteria"/>
</dbReference>
<dbReference type="HOGENOM" id="CLU_137946_0_0_6"/>
<dbReference type="OrthoDB" id="9806411at2"/>
<dbReference type="Proteomes" id="UP000000249">
    <property type="component" value="Chromosome 2"/>
</dbReference>
<dbReference type="GO" id="GO:0022625">
    <property type="term" value="C:cytosolic large ribosomal subunit"/>
    <property type="evidence" value="ECO:0007669"/>
    <property type="project" value="TreeGrafter"/>
</dbReference>
<dbReference type="GO" id="GO:0008097">
    <property type="term" value="F:5S rRNA binding"/>
    <property type="evidence" value="ECO:0007669"/>
    <property type="project" value="InterPro"/>
</dbReference>
<dbReference type="GO" id="GO:0003735">
    <property type="term" value="F:structural constituent of ribosome"/>
    <property type="evidence" value="ECO:0007669"/>
    <property type="project" value="InterPro"/>
</dbReference>
<dbReference type="GO" id="GO:0006412">
    <property type="term" value="P:translation"/>
    <property type="evidence" value="ECO:0007669"/>
    <property type="project" value="UniProtKB-UniRule"/>
</dbReference>
<dbReference type="CDD" id="cd00495">
    <property type="entry name" value="Ribosomal_L25_TL5_CTC"/>
    <property type="match status" value="1"/>
</dbReference>
<dbReference type="FunFam" id="2.40.240.10:FF:000002">
    <property type="entry name" value="50S ribosomal protein L25"/>
    <property type="match status" value="1"/>
</dbReference>
<dbReference type="Gene3D" id="2.40.240.10">
    <property type="entry name" value="Ribosomal Protein L25, Chain P"/>
    <property type="match status" value="1"/>
</dbReference>
<dbReference type="HAMAP" id="MF_01336">
    <property type="entry name" value="Ribosomal_bL25"/>
    <property type="match status" value="1"/>
</dbReference>
<dbReference type="InterPro" id="IPR020056">
    <property type="entry name" value="Rbsml_bL25/Gln-tRNA_synth_N"/>
</dbReference>
<dbReference type="InterPro" id="IPR011035">
    <property type="entry name" value="Ribosomal_bL25/Gln-tRNA_synth"/>
</dbReference>
<dbReference type="InterPro" id="IPR020055">
    <property type="entry name" value="Ribosomal_bL25_short"/>
</dbReference>
<dbReference type="InterPro" id="IPR029751">
    <property type="entry name" value="Ribosomal_L25_dom"/>
</dbReference>
<dbReference type="InterPro" id="IPR020930">
    <property type="entry name" value="Ribosomal_uL5_bac-type"/>
</dbReference>
<dbReference type="NCBIfam" id="NF004612">
    <property type="entry name" value="PRK05943.1"/>
    <property type="match status" value="1"/>
</dbReference>
<dbReference type="PANTHER" id="PTHR33284">
    <property type="entry name" value="RIBOSOMAL PROTEIN L25/GLN-TRNA SYNTHETASE, ANTI-CODON-BINDING DOMAIN-CONTAINING PROTEIN"/>
    <property type="match status" value="1"/>
</dbReference>
<dbReference type="PANTHER" id="PTHR33284:SF1">
    <property type="entry name" value="RIBOSOMAL PROTEIN L25_GLN-TRNA SYNTHETASE, ANTI-CODON-BINDING DOMAIN-CONTAINING PROTEIN"/>
    <property type="match status" value="1"/>
</dbReference>
<dbReference type="Pfam" id="PF01386">
    <property type="entry name" value="Ribosomal_L25p"/>
    <property type="match status" value="1"/>
</dbReference>
<dbReference type="SUPFAM" id="SSF50715">
    <property type="entry name" value="Ribosomal protein L25-like"/>
    <property type="match status" value="1"/>
</dbReference>
<comment type="function">
    <text evidence="1">This is one of the proteins that binds to the 5S RNA in the ribosome where it forms part of the central protuberance.</text>
</comment>
<comment type="subunit">
    <text evidence="1">Part of the 50S ribosomal subunit; part of the 5S rRNA/L5/L18/L25 subcomplex. Contacts the 5S rRNA. Binds to the 5S rRNA independently of L5 and L18.</text>
</comment>
<comment type="similarity">
    <text evidence="1">Belongs to the bacterial ribosomal protein bL25 family.</text>
</comment>
<protein>
    <recommendedName>
        <fullName evidence="1">Large ribosomal subunit protein bL25</fullName>
    </recommendedName>
    <alternativeName>
        <fullName evidence="2">50S ribosomal protein L25</fullName>
    </alternativeName>
</protein>
<sequence length="92" mass="10490">MKFEAVLRTDLGKGASRRLRNTGYFPAIVYGGEAAPVSISLNHDDVMNQMDKPEFYEAIVLVIDGQEVKVKPQDVQRHAYKPKVEHMDFIRI</sequence>
<organism>
    <name type="scientific">Vibrio cholerae serotype O1 (strain ATCC 39541 / Classical Ogawa 395 / O395)</name>
    <dbReference type="NCBI Taxonomy" id="345073"/>
    <lineage>
        <taxon>Bacteria</taxon>
        <taxon>Pseudomonadati</taxon>
        <taxon>Pseudomonadota</taxon>
        <taxon>Gammaproteobacteria</taxon>
        <taxon>Vibrionales</taxon>
        <taxon>Vibrionaceae</taxon>
        <taxon>Vibrio</taxon>
    </lineage>
</organism>
<proteinExistence type="inferred from homology"/>
<evidence type="ECO:0000255" key="1">
    <source>
        <dbReference type="HAMAP-Rule" id="MF_01336"/>
    </source>
</evidence>
<evidence type="ECO:0000305" key="2"/>
<name>RL25_VIBC3</name>
<keyword id="KW-0687">Ribonucleoprotein</keyword>
<keyword id="KW-0689">Ribosomal protein</keyword>
<keyword id="KW-0694">RNA-binding</keyword>
<keyword id="KW-0699">rRNA-binding</keyword>
<accession>A5F7P6</accession>
<accession>C3M142</accession>
<gene>
    <name evidence="1" type="primary">rplY</name>
    <name type="ordered locus">VC0395_A1246</name>
    <name type="ordered locus">VC395_1757</name>
</gene>
<feature type="chain" id="PRO_1000073301" description="Large ribosomal subunit protein bL25">
    <location>
        <begin position="1"/>
        <end position="92"/>
    </location>
</feature>
<reference key="1">
    <citation type="submission" date="2007-03" db="EMBL/GenBank/DDBJ databases">
        <authorList>
            <person name="Heidelberg J."/>
        </authorList>
    </citation>
    <scope>NUCLEOTIDE SEQUENCE [LARGE SCALE GENOMIC DNA]</scope>
    <source>
        <strain>ATCC 39541 / Classical Ogawa 395 / O395</strain>
    </source>
</reference>
<reference key="2">
    <citation type="journal article" date="2008" name="PLoS ONE">
        <title>A recalibrated molecular clock and independent origins for the cholera pandemic clones.</title>
        <authorList>
            <person name="Feng L."/>
            <person name="Reeves P.R."/>
            <person name="Lan R."/>
            <person name="Ren Y."/>
            <person name="Gao C."/>
            <person name="Zhou Z."/>
            <person name="Ren Y."/>
            <person name="Cheng J."/>
            <person name="Wang W."/>
            <person name="Wang J."/>
            <person name="Qian W."/>
            <person name="Li D."/>
            <person name="Wang L."/>
        </authorList>
    </citation>
    <scope>NUCLEOTIDE SEQUENCE [LARGE SCALE GENOMIC DNA]</scope>
    <source>
        <strain>ATCC 39541 / Classical Ogawa 395 / O395</strain>
    </source>
</reference>